<feature type="chain" id="PRO_0000293552" description="Putative aldehyde dehydrogenase">
    <location>
        <begin position="1"/>
        <end position="475"/>
    </location>
</feature>
<feature type="active site" description="Proton acceptor" evidence="1">
    <location>
        <position position="245"/>
    </location>
</feature>
<feature type="active site" description="Nucleophile" evidence="1">
    <location>
        <position position="279"/>
    </location>
</feature>
<feature type="binding site" evidence="1">
    <location>
        <begin position="146"/>
        <end position="147"/>
    </location>
    <ligand>
        <name>NAD(+)</name>
        <dbReference type="ChEBI" id="CHEBI:57540"/>
    </ligand>
</feature>
<feature type="binding site" evidence="1">
    <location>
        <begin position="223"/>
        <end position="224"/>
    </location>
    <ligand>
        <name>NAD(+)</name>
        <dbReference type="ChEBI" id="CHEBI:57540"/>
    </ligand>
</feature>
<feature type="binding site" evidence="1">
    <location>
        <position position="246"/>
    </location>
    <ligand>
        <name>NAD(+)</name>
        <dbReference type="ChEBI" id="CHEBI:57540"/>
    </ligand>
</feature>
<feature type="binding site" evidence="1">
    <location>
        <position position="379"/>
    </location>
    <ligand>
        <name>NAD(+)</name>
        <dbReference type="ChEBI" id="CHEBI:57540"/>
    </ligand>
</feature>
<dbReference type="EC" id="1.2.1.3" evidence="2"/>
<dbReference type="EMBL" id="AJ938182">
    <property type="protein sequence ID" value="CAI81695.1"/>
    <property type="molecule type" value="Genomic_DNA"/>
</dbReference>
<dbReference type="RefSeq" id="WP_001206102.1">
    <property type="nucleotide sequence ID" value="NC_007622.1"/>
</dbReference>
<dbReference type="SMR" id="Q2YUN1"/>
<dbReference type="KEGG" id="sab:SAB2006c"/>
<dbReference type="HOGENOM" id="CLU_005391_0_2_9"/>
<dbReference type="GO" id="GO:0004029">
    <property type="term" value="F:aldehyde dehydrogenase (NAD+) activity"/>
    <property type="evidence" value="ECO:0007669"/>
    <property type="project" value="UniProtKB-EC"/>
</dbReference>
<dbReference type="GO" id="GO:0006081">
    <property type="term" value="P:aldehyde metabolic process"/>
    <property type="evidence" value="ECO:0007669"/>
    <property type="project" value="InterPro"/>
</dbReference>
<dbReference type="CDD" id="cd07138">
    <property type="entry name" value="ALDH_CddD_SSP0762"/>
    <property type="match status" value="1"/>
</dbReference>
<dbReference type="FunFam" id="3.40.605.10:FF:000026">
    <property type="entry name" value="Aldehyde dehydrogenase, putative"/>
    <property type="match status" value="1"/>
</dbReference>
<dbReference type="FunFam" id="3.40.309.10:FF:000012">
    <property type="entry name" value="Betaine aldehyde dehydrogenase"/>
    <property type="match status" value="1"/>
</dbReference>
<dbReference type="FunFam" id="3.40.605.10:FF:000007">
    <property type="entry name" value="NAD/NADP-dependent betaine aldehyde dehydrogenase"/>
    <property type="match status" value="1"/>
</dbReference>
<dbReference type="Gene3D" id="3.40.605.10">
    <property type="entry name" value="Aldehyde Dehydrogenase, Chain A, domain 1"/>
    <property type="match status" value="1"/>
</dbReference>
<dbReference type="Gene3D" id="3.40.309.10">
    <property type="entry name" value="Aldehyde Dehydrogenase, Chain A, domain 2"/>
    <property type="match status" value="1"/>
</dbReference>
<dbReference type="InterPro" id="IPR016161">
    <property type="entry name" value="Ald_DH/histidinol_DH"/>
</dbReference>
<dbReference type="InterPro" id="IPR016163">
    <property type="entry name" value="Ald_DH_C"/>
</dbReference>
<dbReference type="InterPro" id="IPR016160">
    <property type="entry name" value="Ald_DH_CS_CYS"/>
</dbReference>
<dbReference type="InterPro" id="IPR029510">
    <property type="entry name" value="Ald_DH_CS_GLU"/>
</dbReference>
<dbReference type="InterPro" id="IPR016162">
    <property type="entry name" value="Ald_DH_N"/>
</dbReference>
<dbReference type="InterPro" id="IPR015590">
    <property type="entry name" value="Aldehyde_DH_dom"/>
</dbReference>
<dbReference type="InterPro" id="IPR012394">
    <property type="entry name" value="Aldehyde_DH_NAD(P)"/>
</dbReference>
<dbReference type="PANTHER" id="PTHR42804">
    <property type="entry name" value="ALDEHYDE DEHYDROGENASE"/>
    <property type="match status" value="1"/>
</dbReference>
<dbReference type="PANTHER" id="PTHR42804:SF1">
    <property type="entry name" value="ALDEHYDE DEHYDROGENASE-RELATED"/>
    <property type="match status" value="1"/>
</dbReference>
<dbReference type="Pfam" id="PF00171">
    <property type="entry name" value="Aldedh"/>
    <property type="match status" value="1"/>
</dbReference>
<dbReference type="PIRSF" id="PIRSF036492">
    <property type="entry name" value="ALDH"/>
    <property type="match status" value="1"/>
</dbReference>
<dbReference type="SUPFAM" id="SSF53720">
    <property type="entry name" value="ALDH-like"/>
    <property type="match status" value="1"/>
</dbReference>
<dbReference type="PROSITE" id="PS00070">
    <property type="entry name" value="ALDEHYDE_DEHYDR_CYS"/>
    <property type="match status" value="1"/>
</dbReference>
<dbReference type="PROSITE" id="PS00687">
    <property type="entry name" value="ALDEHYDE_DEHYDR_GLU"/>
    <property type="match status" value="1"/>
</dbReference>
<name>ALDH_STAAB</name>
<accession>Q2YUN1</accession>
<comment type="catalytic activity">
    <reaction evidence="2">
        <text>an aldehyde + NAD(+) + H2O = a carboxylate + NADH + 2 H(+)</text>
        <dbReference type="Rhea" id="RHEA:16185"/>
        <dbReference type="ChEBI" id="CHEBI:15377"/>
        <dbReference type="ChEBI" id="CHEBI:15378"/>
        <dbReference type="ChEBI" id="CHEBI:17478"/>
        <dbReference type="ChEBI" id="CHEBI:29067"/>
        <dbReference type="ChEBI" id="CHEBI:57540"/>
        <dbReference type="ChEBI" id="CHEBI:57945"/>
        <dbReference type="EC" id="1.2.1.3"/>
    </reaction>
</comment>
<comment type="similarity">
    <text evidence="2">Belongs to the aldehyde dehydrogenase family.</text>
</comment>
<evidence type="ECO:0000250" key="1">
    <source>
        <dbReference type="UniProtKB" id="P25526"/>
    </source>
</evidence>
<evidence type="ECO:0000305" key="2"/>
<sequence>MRDYTKQYINGEWVESNSNETIEVINPATEEVIGKVAKGNKADVDKAVEAADNAYLEFRHTSVKERQALLDKIVKEYENRKDDIVQAITDELGAPLSLSERVHYQMGLNHFVAARDALDNYEFEERRGDDLVVKEAIGVSGLITPWNFPTNQTSLKLAAAFATGSPVVLKPSEETPFAAVILAEIFDKVGVPKGVFNLVNGDGAGVGNPLSEHPKVRMMSFTGSGPTGSKIMEKAAKDFKKVSLELGGKSPYIVLDDVDIKEAAKATTGKVVNNTGQVCTAGTRVLVPNKIKDAFLAELKEQFSQVRVGNPREDGTQVGPMISKKQFDQVQNYINKGIEEGAELFYGGPGKPEGLEKGYFARPTIFINVDNQMTIAQEEIFGPVMSVITYNDLDEAIQIANDTKYGLAGYVIGKDKETLHKVARSIEAGTVEINEAGRKPDLPFGGYKQSGLGREWGDYGIEEFLEVKSIAGYFK</sequence>
<protein>
    <recommendedName>
        <fullName evidence="2">Putative aldehyde dehydrogenase</fullName>
        <ecNumber evidence="2">1.2.1.3</ecNumber>
    </recommendedName>
</protein>
<gene>
    <name type="ordered locus">SAB2006c</name>
</gene>
<organism>
    <name type="scientific">Staphylococcus aureus (strain bovine RF122 / ET3-1)</name>
    <dbReference type="NCBI Taxonomy" id="273036"/>
    <lineage>
        <taxon>Bacteria</taxon>
        <taxon>Bacillati</taxon>
        <taxon>Bacillota</taxon>
        <taxon>Bacilli</taxon>
        <taxon>Bacillales</taxon>
        <taxon>Staphylococcaceae</taxon>
        <taxon>Staphylococcus</taxon>
    </lineage>
</organism>
<reference key="1">
    <citation type="journal article" date="2007" name="PLoS ONE">
        <title>Molecular correlates of host specialization in Staphylococcus aureus.</title>
        <authorList>
            <person name="Herron-Olson L."/>
            <person name="Fitzgerald J.R."/>
            <person name="Musser J.M."/>
            <person name="Kapur V."/>
        </authorList>
    </citation>
    <scope>NUCLEOTIDE SEQUENCE [LARGE SCALE GENOMIC DNA]</scope>
    <source>
        <strain>bovine RF122 / ET3-1</strain>
    </source>
</reference>
<keyword id="KW-0520">NAD</keyword>
<keyword id="KW-0560">Oxidoreductase</keyword>
<proteinExistence type="inferred from homology"/>